<keyword id="KW-0143">Chaperone</keyword>
<keyword id="KW-0963">Cytoplasm</keyword>
<keyword id="KW-0346">Stress response</keyword>
<organism>
    <name type="scientific">Streptococcus pneumoniae (strain P1031)</name>
    <dbReference type="NCBI Taxonomy" id="488223"/>
    <lineage>
        <taxon>Bacteria</taxon>
        <taxon>Bacillati</taxon>
        <taxon>Bacillota</taxon>
        <taxon>Bacilli</taxon>
        <taxon>Lactobacillales</taxon>
        <taxon>Streptococcaceae</taxon>
        <taxon>Streptococcus</taxon>
    </lineage>
</organism>
<accession>C1CJ05</accession>
<sequence>MAQDIKNEEVEEVQEEEVVETAEETTPEKSELDLANERADEFENKYLRAHAEMQNIQRRANEERQNLQRYRSQDLAKAILPSLDNLERALAVEGLTDDVKKGLGMVQESLIHALKEEGIEEIAADGEFDHNYHMAIQTLPADDEHPVDTIAQVFQKGYKLHDRILRPAMVVVYN</sequence>
<name>GRPE_STRZP</name>
<feature type="chain" id="PRO_1000164221" description="Protein GrpE">
    <location>
        <begin position="1"/>
        <end position="174"/>
    </location>
</feature>
<feature type="region of interest" description="Disordered" evidence="2">
    <location>
        <begin position="1"/>
        <end position="35"/>
    </location>
</feature>
<feature type="compositionally biased region" description="Acidic residues" evidence="2">
    <location>
        <begin position="9"/>
        <end position="25"/>
    </location>
</feature>
<feature type="compositionally biased region" description="Basic and acidic residues" evidence="2">
    <location>
        <begin position="26"/>
        <end position="35"/>
    </location>
</feature>
<evidence type="ECO:0000255" key="1">
    <source>
        <dbReference type="HAMAP-Rule" id="MF_01151"/>
    </source>
</evidence>
<evidence type="ECO:0000256" key="2">
    <source>
        <dbReference type="SAM" id="MobiDB-lite"/>
    </source>
</evidence>
<dbReference type="EMBL" id="CP000920">
    <property type="protein sequence ID" value="ACO21885.1"/>
    <property type="molecule type" value="Genomic_DNA"/>
</dbReference>
<dbReference type="RefSeq" id="WP_000046031.1">
    <property type="nucleotide sequence ID" value="NC_012467.1"/>
</dbReference>
<dbReference type="SMR" id="C1CJ05"/>
<dbReference type="GeneID" id="45654056"/>
<dbReference type="KEGG" id="spp:SPP_0537"/>
<dbReference type="HOGENOM" id="CLU_057217_6_3_9"/>
<dbReference type="GO" id="GO:0005737">
    <property type="term" value="C:cytoplasm"/>
    <property type="evidence" value="ECO:0007669"/>
    <property type="project" value="UniProtKB-SubCell"/>
</dbReference>
<dbReference type="GO" id="GO:0000774">
    <property type="term" value="F:adenyl-nucleotide exchange factor activity"/>
    <property type="evidence" value="ECO:0007669"/>
    <property type="project" value="InterPro"/>
</dbReference>
<dbReference type="GO" id="GO:0042803">
    <property type="term" value="F:protein homodimerization activity"/>
    <property type="evidence" value="ECO:0007669"/>
    <property type="project" value="InterPro"/>
</dbReference>
<dbReference type="GO" id="GO:0051087">
    <property type="term" value="F:protein-folding chaperone binding"/>
    <property type="evidence" value="ECO:0007669"/>
    <property type="project" value="InterPro"/>
</dbReference>
<dbReference type="GO" id="GO:0051082">
    <property type="term" value="F:unfolded protein binding"/>
    <property type="evidence" value="ECO:0007669"/>
    <property type="project" value="TreeGrafter"/>
</dbReference>
<dbReference type="GO" id="GO:0006457">
    <property type="term" value="P:protein folding"/>
    <property type="evidence" value="ECO:0007669"/>
    <property type="project" value="InterPro"/>
</dbReference>
<dbReference type="CDD" id="cd00446">
    <property type="entry name" value="GrpE"/>
    <property type="match status" value="1"/>
</dbReference>
<dbReference type="FunFam" id="2.30.22.10:FF:000004">
    <property type="entry name" value="Protein GrpE"/>
    <property type="match status" value="1"/>
</dbReference>
<dbReference type="FunFam" id="3.90.20.20:FF:000007">
    <property type="entry name" value="Protein GrpE"/>
    <property type="match status" value="1"/>
</dbReference>
<dbReference type="Gene3D" id="3.90.20.20">
    <property type="match status" value="1"/>
</dbReference>
<dbReference type="Gene3D" id="2.30.22.10">
    <property type="entry name" value="Head domain of nucleotide exchange factor GrpE"/>
    <property type="match status" value="1"/>
</dbReference>
<dbReference type="HAMAP" id="MF_01151">
    <property type="entry name" value="GrpE"/>
    <property type="match status" value="1"/>
</dbReference>
<dbReference type="InterPro" id="IPR000740">
    <property type="entry name" value="GrpE"/>
</dbReference>
<dbReference type="InterPro" id="IPR013805">
    <property type="entry name" value="GrpE_coiled_coil"/>
</dbReference>
<dbReference type="InterPro" id="IPR009012">
    <property type="entry name" value="GrpE_head"/>
</dbReference>
<dbReference type="NCBIfam" id="NF010738">
    <property type="entry name" value="PRK14140.1"/>
    <property type="match status" value="1"/>
</dbReference>
<dbReference type="NCBIfam" id="NF010753">
    <property type="entry name" value="PRK14156.1"/>
    <property type="match status" value="1"/>
</dbReference>
<dbReference type="NCBIfam" id="NF010759">
    <property type="entry name" value="PRK14162.1"/>
    <property type="match status" value="1"/>
</dbReference>
<dbReference type="PANTHER" id="PTHR21237">
    <property type="entry name" value="GRPE PROTEIN"/>
    <property type="match status" value="1"/>
</dbReference>
<dbReference type="PANTHER" id="PTHR21237:SF23">
    <property type="entry name" value="GRPE PROTEIN HOMOLOG, MITOCHONDRIAL"/>
    <property type="match status" value="1"/>
</dbReference>
<dbReference type="Pfam" id="PF01025">
    <property type="entry name" value="GrpE"/>
    <property type="match status" value="1"/>
</dbReference>
<dbReference type="PRINTS" id="PR00773">
    <property type="entry name" value="GRPEPROTEIN"/>
</dbReference>
<dbReference type="SUPFAM" id="SSF58014">
    <property type="entry name" value="Coiled-coil domain of nucleotide exchange factor GrpE"/>
    <property type="match status" value="1"/>
</dbReference>
<dbReference type="SUPFAM" id="SSF51064">
    <property type="entry name" value="Head domain of nucleotide exchange factor GrpE"/>
    <property type="match status" value="1"/>
</dbReference>
<dbReference type="PROSITE" id="PS01071">
    <property type="entry name" value="GRPE"/>
    <property type="match status" value="1"/>
</dbReference>
<reference key="1">
    <citation type="journal article" date="2010" name="Genome Biol.">
        <title>Structure and dynamics of the pan-genome of Streptococcus pneumoniae and closely related species.</title>
        <authorList>
            <person name="Donati C."/>
            <person name="Hiller N.L."/>
            <person name="Tettelin H."/>
            <person name="Muzzi A."/>
            <person name="Croucher N.J."/>
            <person name="Angiuoli S.V."/>
            <person name="Oggioni M."/>
            <person name="Dunning Hotopp J.C."/>
            <person name="Hu F.Z."/>
            <person name="Riley D.R."/>
            <person name="Covacci A."/>
            <person name="Mitchell T.J."/>
            <person name="Bentley S.D."/>
            <person name="Kilian M."/>
            <person name="Ehrlich G.D."/>
            <person name="Rappuoli R."/>
            <person name="Moxon E.R."/>
            <person name="Masignani V."/>
        </authorList>
    </citation>
    <scope>NUCLEOTIDE SEQUENCE [LARGE SCALE GENOMIC DNA]</scope>
    <source>
        <strain>P1031</strain>
    </source>
</reference>
<comment type="function">
    <text evidence="1">Participates actively in the response to hyperosmotic and heat shock by preventing the aggregation of stress-denatured proteins, in association with DnaK and GrpE. It is the nucleotide exchange factor for DnaK and may function as a thermosensor. Unfolded proteins bind initially to DnaJ; upon interaction with the DnaJ-bound protein, DnaK hydrolyzes its bound ATP, resulting in the formation of a stable complex. GrpE releases ADP from DnaK; ATP binding to DnaK triggers the release of the substrate protein, thus completing the reaction cycle. Several rounds of ATP-dependent interactions between DnaJ, DnaK and GrpE are required for fully efficient folding.</text>
</comment>
<comment type="subunit">
    <text evidence="1">Homodimer.</text>
</comment>
<comment type="subcellular location">
    <subcellularLocation>
        <location evidence="1">Cytoplasm</location>
    </subcellularLocation>
</comment>
<comment type="similarity">
    <text evidence="1">Belongs to the GrpE family.</text>
</comment>
<protein>
    <recommendedName>
        <fullName evidence="1">Protein GrpE</fullName>
    </recommendedName>
    <alternativeName>
        <fullName evidence="1">HSP-70 cofactor</fullName>
    </alternativeName>
</protein>
<proteinExistence type="inferred from homology"/>
<gene>
    <name evidence="1" type="primary">grpE</name>
    <name type="ordered locus">SPP_0537</name>
</gene>